<reference key="1">
    <citation type="journal article" date="1995" name="Virology">
        <title>Replication of Orgyia pseudotsugata baculovirus DNA: lef-2 and ie-1 are essential and ie-2, p34, and Op-iap are stimulatory genes.</title>
        <authorList>
            <person name="Ahrens C.H."/>
            <person name="Rohrmann G.F."/>
        </authorList>
    </citation>
    <scope>NUCLEOTIDE SEQUENCE [GENOMIC DNA]</scope>
</reference>
<reference key="2">
    <citation type="journal article" date="1997" name="Virology">
        <title>The sequence of the Orgyia pseudotsugata multinucleocapsid nuclear polyhedrosis virus genome.</title>
        <authorList>
            <person name="Ahrens C.H."/>
            <person name="Russell R.R."/>
            <person name="Funk C.J."/>
            <person name="Evans J."/>
            <person name="Harwood S."/>
            <person name="Rohrmann G.F."/>
        </authorList>
    </citation>
    <scope>NUCLEOTIDE SEQUENCE [LARGE SCALE GENOMIC DNA]</scope>
</reference>
<organism>
    <name type="scientific">Orgyia pseudotsugata multicapsid polyhedrosis virus</name>
    <name type="common">OpMNPV</name>
    <dbReference type="NCBI Taxonomy" id="262177"/>
    <lineage>
        <taxon>Viruses</taxon>
        <taxon>Viruses incertae sedis</taxon>
        <taxon>Naldaviricetes</taxon>
        <taxon>Lefavirales</taxon>
        <taxon>Baculoviridae</taxon>
        <taxon>Alphabaculovirus</taxon>
        <taxon>Alphabaculovirus orpseudotsugatae</taxon>
    </lineage>
</organism>
<dbReference type="EMBL" id="D50053">
    <property type="protein sequence ID" value="BAA08771.1"/>
    <property type="molecule type" value="Genomic_DNA"/>
</dbReference>
<dbReference type="EMBL" id="U75930">
    <property type="protein sequence ID" value="AAC59006.1"/>
    <property type="molecule type" value="Genomic_DNA"/>
</dbReference>
<dbReference type="RefSeq" id="NP_046163.1">
    <property type="nucleotide sequence ID" value="NC_001875.2"/>
</dbReference>
<dbReference type="SMR" id="Q65371"/>
<dbReference type="KEGG" id="vg:912071"/>
<dbReference type="OrthoDB" id="25338at10239"/>
<dbReference type="Proteomes" id="UP000009248">
    <property type="component" value="Genome"/>
</dbReference>
<dbReference type="InterPro" id="IPR022556">
    <property type="entry name" value="AcMNPV_Orf5"/>
</dbReference>
<dbReference type="Pfam" id="PF10845">
    <property type="entry name" value="DUF2576"/>
    <property type="match status" value="1"/>
</dbReference>
<accession>Q65371</accession>
<accession>O12548</accession>
<accession>O12837</accession>
<name>Y005_NPVOP</name>
<protein>
    <recommendedName>
        <fullName>Uncharacterized 8.6 kDa protein</fullName>
    </recommendedName>
    <alternativeName>
        <fullName>ORF7</fullName>
    </alternativeName>
</protein>
<keyword id="KW-1185">Reference proteome</keyword>
<organismHost>
    <name type="scientific">Orgyia pseudotsugata</name>
    <name type="common">Douglas-fir tussock moth</name>
    <dbReference type="NCBI Taxonomy" id="33414"/>
</organismHost>
<proteinExistence type="predicted"/>
<gene>
    <name type="ORF">ORF7</name>
</gene>
<sequence>MNRPTMRNTAAVTTDYDREQLRRELNSLRRSVHELCTRSATGFDCNRFLEAGDRAPAVIVKAAANGGQHSSLICDKV</sequence>
<feature type="chain" id="PRO_0000132945" description="Uncharacterized 8.6 kDa protein">
    <location>
        <begin position="1"/>
        <end position="77"/>
    </location>
</feature>